<name>AATC_METS3</name>
<accession>A5UKB4</accession>
<keyword id="KW-0066">ATP synthesis</keyword>
<keyword id="KW-1003">Cell membrane</keyword>
<keyword id="KW-0375">Hydrogen ion transport</keyword>
<keyword id="KW-0406">Ion transport</keyword>
<keyword id="KW-0472">Membrane</keyword>
<keyword id="KW-0813">Transport</keyword>
<dbReference type="EMBL" id="CP000678">
    <property type="protein sequence ID" value="ABQ86642.1"/>
    <property type="molecule type" value="Genomic_DNA"/>
</dbReference>
<dbReference type="RefSeq" id="WP_004032185.1">
    <property type="nucleotide sequence ID" value="NZ_CP117965.1"/>
</dbReference>
<dbReference type="SMR" id="A5UKB4"/>
<dbReference type="STRING" id="420247.Msm_0437"/>
<dbReference type="EnsemblBacteria" id="ABQ86642">
    <property type="protein sequence ID" value="ABQ86642"/>
    <property type="gene ID" value="Msm_0437"/>
</dbReference>
<dbReference type="KEGG" id="msi:Msm_0437"/>
<dbReference type="PATRIC" id="fig|420247.28.peg.437"/>
<dbReference type="eggNOG" id="arCOG02459">
    <property type="taxonomic scope" value="Archaea"/>
</dbReference>
<dbReference type="HOGENOM" id="CLU_059311_0_0_2"/>
<dbReference type="Proteomes" id="UP000001992">
    <property type="component" value="Chromosome"/>
</dbReference>
<dbReference type="GO" id="GO:0005886">
    <property type="term" value="C:plasma membrane"/>
    <property type="evidence" value="ECO:0007669"/>
    <property type="project" value="UniProtKB-SubCell"/>
</dbReference>
<dbReference type="GO" id="GO:0033179">
    <property type="term" value="C:proton-transporting V-type ATPase, V0 domain"/>
    <property type="evidence" value="ECO:0007669"/>
    <property type="project" value="InterPro"/>
</dbReference>
<dbReference type="GO" id="GO:0005524">
    <property type="term" value="F:ATP binding"/>
    <property type="evidence" value="ECO:0007669"/>
    <property type="project" value="UniProtKB-UniRule"/>
</dbReference>
<dbReference type="GO" id="GO:0046933">
    <property type="term" value="F:proton-transporting ATP synthase activity, rotational mechanism"/>
    <property type="evidence" value="ECO:0007669"/>
    <property type="project" value="UniProtKB-UniRule"/>
</dbReference>
<dbReference type="GO" id="GO:0046961">
    <property type="term" value="F:proton-transporting ATPase activity, rotational mechanism"/>
    <property type="evidence" value="ECO:0007669"/>
    <property type="project" value="InterPro"/>
</dbReference>
<dbReference type="GO" id="GO:0042777">
    <property type="term" value="P:proton motive force-driven plasma membrane ATP synthesis"/>
    <property type="evidence" value="ECO:0007669"/>
    <property type="project" value="UniProtKB-UniRule"/>
</dbReference>
<dbReference type="Gene3D" id="1.10.132.50">
    <property type="entry name" value="ATP synthase (C/AC39) subunit, domain 3"/>
    <property type="match status" value="1"/>
</dbReference>
<dbReference type="Gene3D" id="1.20.1690.10">
    <property type="entry name" value="V-type ATP synthase subunit C domain"/>
    <property type="match status" value="2"/>
</dbReference>
<dbReference type="HAMAP" id="MF_00314">
    <property type="entry name" value="ATP_synth_C_arch"/>
    <property type="match status" value="1"/>
</dbReference>
<dbReference type="InterPro" id="IPR036079">
    <property type="entry name" value="ATPase_csu/dsu_sf"/>
</dbReference>
<dbReference type="InterPro" id="IPR014272">
    <property type="entry name" value="ATPase_V0-cplx_csu"/>
</dbReference>
<dbReference type="InterPro" id="IPR002843">
    <property type="entry name" value="ATPase_V0-cplx_csu/dsu"/>
</dbReference>
<dbReference type="InterPro" id="IPR050873">
    <property type="entry name" value="V-ATPase_V0D/AC39_subunit"/>
</dbReference>
<dbReference type="InterPro" id="IPR035067">
    <property type="entry name" value="V-type_ATPase_csu/dsu"/>
</dbReference>
<dbReference type="InterPro" id="IPR044911">
    <property type="entry name" value="V-type_ATPase_csu/dsu_dom_3"/>
</dbReference>
<dbReference type="NCBIfam" id="TIGR02923">
    <property type="entry name" value="AhaC"/>
    <property type="match status" value="1"/>
</dbReference>
<dbReference type="NCBIfam" id="NF002267">
    <property type="entry name" value="PRK01198.1-3"/>
    <property type="match status" value="1"/>
</dbReference>
<dbReference type="PANTHER" id="PTHR38682">
    <property type="entry name" value="V-TYPE ATP SYNTHASE SUBUNIT C"/>
    <property type="match status" value="1"/>
</dbReference>
<dbReference type="PANTHER" id="PTHR38682:SF1">
    <property type="entry name" value="V-TYPE ATP SYNTHASE SUBUNIT C"/>
    <property type="match status" value="1"/>
</dbReference>
<dbReference type="Pfam" id="PF01992">
    <property type="entry name" value="vATP-synt_AC39"/>
    <property type="match status" value="1"/>
</dbReference>
<dbReference type="SUPFAM" id="SSF103486">
    <property type="entry name" value="V-type ATP synthase subunit C"/>
    <property type="match status" value="1"/>
</dbReference>
<organism>
    <name type="scientific">Methanobrevibacter smithii (strain ATCC 35061 / DSM 861 / OCM 144 / PS)</name>
    <dbReference type="NCBI Taxonomy" id="420247"/>
    <lineage>
        <taxon>Archaea</taxon>
        <taxon>Methanobacteriati</taxon>
        <taxon>Methanobacteriota</taxon>
        <taxon>Methanomada group</taxon>
        <taxon>Methanobacteria</taxon>
        <taxon>Methanobacteriales</taxon>
        <taxon>Methanobacteriaceae</taxon>
        <taxon>Methanobrevibacter</taxon>
    </lineage>
</organism>
<reference key="1">
    <citation type="journal article" date="2007" name="Proc. Natl. Acad. Sci. U.S.A.">
        <title>Genomic and metabolic adaptations of Methanobrevibacter smithii to the human gut.</title>
        <authorList>
            <person name="Samuel B.S."/>
            <person name="Hansen E.E."/>
            <person name="Manchester J.K."/>
            <person name="Coutinho P.M."/>
            <person name="Henrissat B."/>
            <person name="Fulton R."/>
            <person name="Latreille P."/>
            <person name="Kim K."/>
            <person name="Wilson R.K."/>
            <person name="Gordon J.I."/>
        </authorList>
    </citation>
    <scope>NUCLEOTIDE SEQUENCE [LARGE SCALE GENOMIC DNA]</scope>
    <source>
        <strain>ATCC 35061 / DSM 861 / OCM 144 / PS</strain>
    </source>
</reference>
<gene>
    <name evidence="1" type="primary">atpC</name>
    <name type="ordered locus">Msm_0437</name>
</gene>
<protein>
    <recommendedName>
        <fullName evidence="1">A-type ATP synthase subunit C</fullName>
    </recommendedName>
</protein>
<evidence type="ECO:0000255" key="1">
    <source>
        <dbReference type="HAMAP-Rule" id="MF_00314"/>
    </source>
</evidence>
<proteinExistence type="inferred from homology"/>
<sequence length="384" mass="42622">MADEIATLISSAGLTNETFLVLCVIAVIVIGAIVVIITSRPILDIYPYLTPSASVRARKGRLFDEKQLSEIVETNNVHEFENYLKGVPDYADVLEEYPVDKALDIQCADTYEFVARIAPKEIRSSFVVMSKKTDINNIKSLLTAKEVGLTEEETEDLLIPRGVLYEDLRSLIDADGVTDVVTSLDGTEYAAVLEDALPKYENSGMVLALESALDKYYLESLLRSSNVPADENKQILFSYVGTQVDIANLKLIIRAKKDNLSYDDIAPYILEDGYQLREWKLKDLMESPDVTNVISGLEGTKYSDVLTDAMAKYNENASIAVFEKALDAYLSKSAKSLSMKKPLGIGPIIGYVSQKETEIKNLKIIARAKREAGFPNSKIMEMLI</sequence>
<feature type="chain" id="PRO_1000048371" description="A-type ATP synthase subunit C">
    <location>
        <begin position="1"/>
        <end position="384"/>
    </location>
</feature>
<comment type="function">
    <text evidence="1">Component of the A-type ATP synthase that produces ATP from ADP in the presence of a proton gradient across the membrane.</text>
</comment>
<comment type="subunit">
    <text evidence="1">Has multiple subunits with at least A(3), B(3), C, D, E, F, H, I and proteolipid K(x).</text>
</comment>
<comment type="subcellular location">
    <subcellularLocation>
        <location evidence="1">Cell membrane</location>
        <topology evidence="1">Peripheral membrane protein</topology>
    </subcellularLocation>
</comment>
<comment type="similarity">
    <text evidence="1">Belongs to the V-ATPase V0D/AC39 subunit family.</text>
</comment>